<keyword id="KW-0574">Periplasm</keyword>
<keyword id="KW-1185">Reference proteome</keyword>
<keyword id="KW-0732">Signal</keyword>
<dbReference type="EMBL" id="AE004091">
    <property type="protein sequence ID" value="AAG03650.1"/>
    <property type="molecule type" value="Genomic_DNA"/>
</dbReference>
<dbReference type="PIR" id="H83612">
    <property type="entry name" value="H83612"/>
</dbReference>
<dbReference type="RefSeq" id="NP_248952.1">
    <property type="nucleotide sequence ID" value="NC_002516.2"/>
</dbReference>
<dbReference type="RefSeq" id="WP_003112696.1">
    <property type="nucleotide sequence ID" value="NZ_QZGE01000024.1"/>
</dbReference>
<dbReference type="IntAct" id="Q9I6M8">
    <property type="interactions" value="2"/>
</dbReference>
<dbReference type="MINT" id="Q9I6M8"/>
<dbReference type="STRING" id="208964.PA0261"/>
<dbReference type="PaxDb" id="208964-PA0261"/>
<dbReference type="DNASU" id="881884"/>
<dbReference type="GeneID" id="881884"/>
<dbReference type="KEGG" id="pae:PA0261"/>
<dbReference type="PATRIC" id="fig|208964.12.peg.272"/>
<dbReference type="PseudoCAP" id="PA0261"/>
<dbReference type="HOGENOM" id="CLU_1609361_0_0_6"/>
<dbReference type="InParanoid" id="Q9I6M8"/>
<dbReference type="OrthoDB" id="6876622at2"/>
<dbReference type="BioCyc" id="PAER208964:G1FZ6-263-MONOMER"/>
<dbReference type="Proteomes" id="UP000002438">
    <property type="component" value="Chromosome"/>
</dbReference>
<dbReference type="GO" id="GO:0042597">
    <property type="term" value="C:periplasmic space"/>
    <property type="evidence" value="ECO:0007669"/>
    <property type="project" value="UniProtKB-SubCell"/>
</dbReference>
<gene>
    <name evidence="3" type="primary">tli3</name>
    <name evidence="4" type="ordered locus">PA0261</name>
</gene>
<protein>
    <recommendedName>
        <fullName evidence="3">Type VI lipase immunity protein Tli3</fullName>
    </recommendedName>
</protein>
<sequence length="165" mass="18391">MKCKTLLIACLFGLGSAQALAVSKLPPQIPVHAGSGRVTLDLRPLLAETNDVEITRVSVCRRVGSHCQETLWRIELPPGWRAGEIEVFGDYPGSSVLLRRPERLQPDGSYNAFIHFNERSRRHRQTVSSIAVEFCLAGEPGNWMLLDEATCLARRNAEERQGEKP</sequence>
<proteinExistence type="evidence at protein level"/>
<feature type="signal peptide" evidence="1">
    <location>
        <begin position="1"/>
        <end position="21"/>
    </location>
</feature>
<feature type="chain" id="PRO_5004327153" description="Type VI lipase immunity protein Tli3">
    <location>
        <begin position="22"/>
        <end position="165"/>
    </location>
</feature>
<accession>Q9I6M8</accession>
<organism>
    <name type="scientific">Pseudomonas aeruginosa (strain ATCC 15692 / DSM 22644 / CIP 104116 / JCM 14847 / LMG 12228 / 1C / PRS 101 / PAO1)</name>
    <dbReference type="NCBI Taxonomy" id="208964"/>
    <lineage>
        <taxon>Bacteria</taxon>
        <taxon>Pseudomonadati</taxon>
        <taxon>Pseudomonadota</taxon>
        <taxon>Gammaproteobacteria</taxon>
        <taxon>Pseudomonadales</taxon>
        <taxon>Pseudomonadaceae</taxon>
        <taxon>Pseudomonas</taxon>
    </lineage>
</organism>
<evidence type="ECO:0000255" key="1"/>
<evidence type="ECO:0000269" key="2">
    <source>
    </source>
</evidence>
<evidence type="ECO:0000303" key="3">
    <source>
    </source>
</evidence>
<evidence type="ECO:0000312" key="4">
    <source>
        <dbReference type="EMBL" id="AAG03650.1"/>
    </source>
</evidence>
<reference key="1">
    <citation type="journal article" date="2000" name="Nature">
        <title>Complete genome sequence of Pseudomonas aeruginosa PAO1, an opportunistic pathogen.</title>
        <authorList>
            <person name="Stover C.K."/>
            <person name="Pham X.-Q.T."/>
            <person name="Erwin A.L."/>
            <person name="Mizoguchi S.D."/>
            <person name="Warrener P."/>
            <person name="Hickey M.J."/>
            <person name="Brinkman F.S.L."/>
            <person name="Hufnagle W.O."/>
            <person name="Kowalik D.J."/>
            <person name="Lagrou M."/>
            <person name="Garber R.L."/>
            <person name="Goltry L."/>
            <person name="Tolentino E."/>
            <person name="Westbrock-Wadman S."/>
            <person name="Yuan Y."/>
            <person name="Brody L.L."/>
            <person name="Coulter S.N."/>
            <person name="Folger K.R."/>
            <person name="Kas A."/>
            <person name="Larbig K."/>
            <person name="Lim R.M."/>
            <person name="Smith K.A."/>
            <person name="Spencer D.H."/>
            <person name="Wong G.K.-S."/>
            <person name="Wu Z."/>
            <person name="Paulsen I.T."/>
            <person name="Reizer J."/>
            <person name="Saier M.H. Jr."/>
            <person name="Hancock R.E.W."/>
            <person name="Lory S."/>
            <person name="Olson M.V."/>
        </authorList>
    </citation>
    <scope>NUCLEOTIDE SEQUENCE [LARGE SCALE GENOMIC DNA]</scope>
    <source>
        <strain>ATCC 15692 / DSM 22644 / CIP 104116 / JCM 14847 / LMG 12228 / 1C / PRS 101 / PAO1</strain>
    </source>
</reference>
<reference key="2">
    <citation type="journal article" date="2019" name="Front. Microbiol.">
        <title>A Type VI Secretion System Trans-Kingdom Effector Is Required for the Delivery of a Novel Antibacterial Toxin in Pseudomonas aeruginosa.</title>
        <authorList>
            <person name="Berni B."/>
            <person name="Soscia C."/>
            <person name="Djermoun S."/>
            <person name="Ize B."/>
            <person name="Bleves S."/>
        </authorList>
    </citation>
    <scope>FUNCTION</scope>
    <scope>INTERACTION WITH TLE3</scope>
    <scope>SUBCELLULAR LOCATION</scope>
    <scope>DISRUPTION PHENOTYPE</scope>
    <source>
        <strain>ATCC 15692 / DSM 22644 / CIP 104116 / JCM 14847 / LMG 12228 / 1C / PRS 101 / PAO1</strain>
    </source>
</reference>
<name>TLI3_PSEAE</name>
<comment type="function">
    <text evidence="2">Immunity protein that neutralizes the toxicity of the P.aeruginosa antibacterial toxin Tle3 in the periplasm to protect the cell from fratricide intoxication.</text>
</comment>
<comment type="subunit">
    <text evidence="2">Interacts with the Tle3 toxin.</text>
</comment>
<comment type="subcellular location">
    <subcellularLocation>
        <location evidence="2">Periplasm</location>
    </subcellularLocation>
</comment>
<comment type="disruption phenotype">
    <text evidence="2">Growth of mutants lacking this gene is affected in the presence of various P.aeruginosa attacker strains because mutants cannot resist Tle3 toxicity.</text>
</comment>